<proteinExistence type="evidence at protein level"/>
<keyword id="KW-0067">ATP-binding</keyword>
<keyword id="KW-0997">Cell inner membrane</keyword>
<keyword id="KW-1003">Cell membrane</keyword>
<keyword id="KW-0460">Magnesium</keyword>
<keyword id="KW-0472">Membrane</keyword>
<keyword id="KW-0479">Metal-binding</keyword>
<keyword id="KW-0547">Nucleotide-binding</keyword>
<keyword id="KW-0597">Phosphoprotein</keyword>
<keyword id="KW-1185">Reference proteome</keyword>
<keyword id="KW-1278">Translocase</keyword>
<keyword id="KW-0812">Transmembrane</keyword>
<keyword id="KW-1133">Transmembrane helix</keyword>
<keyword id="KW-0813">Transport</keyword>
<gene>
    <name type="primary">mgtA</name>
    <name type="ordered locus">STM4456</name>
</gene>
<organism>
    <name type="scientific">Salmonella typhimurium (strain LT2 / SGSC1412 / ATCC 700720)</name>
    <dbReference type="NCBI Taxonomy" id="99287"/>
    <lineage>
        <taxon>Bacteria</taxon>
        <taxon>Pseudomonadati</taxon>
        <taxon>Pseudomonadota</taxon>
        <taxon>Gammaproteobacteria</taxon>
        <taxon>Enterobacterales</taxon>
        <taxon>Enterobacteriaceae</taxon>
        <taxon>Salmonella</taxon>
    </lineage>
</organism>
<evidence type="ECO:0000250" key="1"/>
<evidence type="ECO:0000255" key="2"/>
<evidence type="ECO:0000269" key="3">
    <source>
    </source>
</evidence>
<evidence type="ECO:0000269" key="4">
    <source>
    </source>
</evidence>
<evidence type="ECO:0000269" key="5">
    <source>
    </source>
</evidence>
<evidence type="ECO:0000269" key="6">
    <source>
    </source>
</evidence>
<evidence type="ECO:0000305" key="7"/>
<feature type="chain" id="PRO_0000046184" description="Magnesium-transporting ATPase, P-type 1">
    <location>
        <begin position="1"/>
        <end position="902"/>
    </location>
</feature>
<feature type="topological domain" description="Cytoplasmic" evidence="2">
    <location>
        <begin position="1"/>
        <end position="98"/>
    </location>
</feature>
<feature type="transmembrane region" description="Helical; Name=1" evidence="2">
    <location>
        <begin position="99"/>
        <end position="119"/>
    </location>
</feature>
<feature type="topological domain" description="Extracellular" evidence="2">
    <location>
        <position position="120"/>
    </location>
</feature>
<feature type="transmembrane region" description="Helical; Name=2" evidence="2">
    <location>
        <begin position="121"/>
        <end position="141"/>
    </location>
</feature>
<feature type="topological domain" description="Cytoplasmic" evidence="2">
    <location>
        <begin position="142"/>
        <end position="291"/>
    </location>
</feature>
<feature type="transmembrane region" description="Helical; Name=3" evidence="2">
    <location>
        <begin position="292"/>
        <end position="312"/>
    </location>
</feature>
<feature type="topological domain" description="Extracellular" evidence="2">
    <location>
        <begin position="313"/>
        <end position="321"/>
    </location>
</feature>
<feature type="transmembrane region" description="Helical; Name=4" evidence="2">
    <location>
        <begin position="322"/>
        <end position="339"/>
    </location>
</feature>
<feature type="topological domain" description="Cytoplasmic" evidence="2">
    <location>
        <begin position="340"/>
        <end position="699"/>
    </location>
</feature>
<feature type="transmembrane region" description="Helical; Name=5" evidence="2">
    <location>
        <begin position="700"/>
        <end position="719"/>
    </location>
</feature>
<feature type="topological domain" description="Extracellular" evidence="2">
    <location>
        <begin position="720"/>
        <end position="728"/>
    </location>
</feature>
<feature type="transmembrane region" description="Helical; Name=6" evidence="2">
    <location>
        <begin position="729"/>
        <end position="748"/>
    </location>
</feature>
<feature type="topological domain" description="Cytoplasmic" evidence="2">
    <location>
        <begin position="749"/>
        <end position="770"/>
    </location>
</feature>
<feature type="transmembrane region" description="Helical; Name=7" evidence="2">
    <location>
        <begin position="771"/>
        <end position="794"/>
    </location>
</feature>
<feature type="topological domain" description="Extracellular" evidence="2">
    <location>
        <begin position="795"/>
        <end position="803"/>
    </location>
</feature>
<feature type="transmembrane region" description="Helical; Name=8" evidence="2">
    <location>
        <begin position="804"/>
        <end position="822"/>
    </location>
</feature>
<feature type="topological domain" description="Cytoplasmic" evidence="2">
    <location>
        <begin position="823"/>
        <end position="835"/>
    </location>
</feature>
<feature type="transmembrane region" description="Helical; Name=9" evidence="2">
    <location>
        <begin position="836"/>
        <end position="855"/>
    </location>
</feature>
<feature type="topological domain" description="Extracellular" evidence="2">
    <location>
        <begin position="856"/>
        <end position="870"/>
    </location>
</feature>
<feature type="transmembrane region" description="Helical; Name=10" evidence="2">
    <location>
        <begin position="871"/>
        <end position="890"/>
    </location>
</feature>
<feature type="topological domain" description="Cytoplasmic" evidence="2">
    <location>
        <begin position="891"/>
        <end position="902"/>
    </location>
</feature>
<feature type="active site" description="4-aspartylphosphate intermediate" evidence="1">
    <location>
        <position position="377"/>
    </location>
</feature>
<feature type="binding site" evidence="2">
    <location>
        <position position="335"/>
    </location>
    <ligand>
        <name>Mg(2+)</name>
        <dbReference type="ChEBI" id="CHEBI:18420"/>
    </ligand>
</feature>
<feature type="binding site" evidence="1">
    <location>
        <position position="645"/>
    </location>
    <ligand>
        <name>Mg(2+)</name>
        <dbReference type="ChEBI" id="CHEBI:18420"/>
    </ligand>
</feature>
<feature type="binding site" evidence="1">
    <location>
        <position position="649"/>
    </location>
    <ligand>
        <name>Mg(2+)</name>
        <dbReference type="ChEBI" id="CHEBI:18420"/>
    </ligand>
</feature>
<feature type="binding site" evidence="2">
    <location>
        <position position="713"/>
    </location>
    <ligand>
        <name>Mg(2+)</name>
        <dbReference type="ChEBI" id="CHEBI:18420"/>
    </ligand>
</feature>
<feature type="binding site" evidence="2">
    <location>
        <position position="738"/>
    </location>
    <ligand>
        <name>Mg(2+)</name>
        <dbReference type="ChEBI" id="CHEBI:18420"/>
    </ligand>
</feature>
<feature type="binding site" evidence="2">
    <location>
        <position position="742"/>
    </location>
    <ligand>
        <name>Mg(2+)</name>
        <dbReference type="ChEBI" id="CHEBI:18420"/>
    </ligand>
</feature>
<accession>P36640</accession>
<reference key="1">
    <citation type="journal article" date="1995" name="J. Bacteriol.">
        <title>Magnesium transport in Salmonella typhimurium: mgtA encodes a P-type ATPase and is regulated by Mg2+ in a manner similar to that of the mgtB P-type ATPase.</title>
        <authorList>
            <person name="Tao T."/>
            <person name="Snavely M.D."/>
            <person name="Farr S.G."/>
            <person name="Maguire M.E."/>
        </authorList>
    </citation>
    <scope>NUCLEOTIDE SEQUENCE [GENOMIC DNA]</scope>
    <scope>INDUCTION</scope>
    <source>
        <strain>LT2</strain>
    </source>
</reference>
<reference key="2">
    <citation type="journal article" date="2001" name="Nature">
        <title>Complete genome sequence of Salmonella enterica serovar Typhimurium LT2.</title>
        <authorList>
            <person name="McClelland M."/>
            <person name="Sanderson K.E."/>
            <person name="Spieth J."/>
            <person name="Clifton S.W."/>
            <person name="Latreille P."/>
            <person name="Courtney L."/>
            <person name="Porwollik S."/>
            <person name="Ali J."/>
            <person name="Dante M."/>
            <person name="Du F."/>
            <person name="Hou S."/>
            <person name="Layman D."/>
            <person name="Leonard S."/>
            <person name="Nguyen C."/>
            <person name="Scott K."/>
            <person name="Holmes A."/>
            <person name="Grewal N."/>
            <person name="Mulvaney E."/>
            <person name="Ryan E."/>
            <person name="Sun H."/>
            <person name="Florea L."/>
            <person name="Miller W."/>
            <person name="Stoneking T."/>
            <person name="Nhan M."/>
            <person name="Waterston R."/>
            <person name="Wilson R.K."/>
        </authorList>
    </citation>
    <scope>NUCLEOTIDE SEQUENCE [LARGE SCALE GENOMIC DNA]</scope>
    <source>
        <strain>LT2 / SGSC1412 / ATCC 700720</strain>
    </source>
</reference>
<reference key="3">
    <citation type="journal article" date="1989" name="J. Bacteriol.">
        <title>Magnesium transport in Salmonella typhimurium: genetic characterization and cloning of three magnesium transport loci.</title>
        <authorList>
            <person name="Hmiel S.P."/>
            <person name="Snavely M.D."/>
            <person name="Florer J.B."/>
            <person name="Maguire M.E."/>
            <person name="Miller C.G."/>
        </authorList>
    </citation>
    <scope>FUNCTION</scope>
</reference>
<reference key="4">
    <citation type="journal article" date="1989" name="J. Bacteriol.">
        <title>Magnesium transport in Salmonella typhimurium: expression of cloned genes for three distinct Mg2+ transport systems.</title>
        <authorList>
            <person name="Snavely M.D."/>
            <person name="Florer J.B."/>
            <person name="Miller C.G."/>
            <person name="Maguire M.E."/>
        </authorList>
    </citation>
    <scope>SUBCELLULAR LOCATION</scope>
</reference>
<reference key="5">
    <citation type="journal article" date="1989" name="J. Bacteriol.">
        <title>Magnesium transport in Salmonella typhimurium: (28)Mg2+ transport by the CorA, MgtA, and MgtB systems.</title>
        <authorList>
            <person name="Snavely M.D."/>
            <person name="Florer J.B."/>
            <person name="Miller C.G."/>
            <person name="Maguire M.E."/>
        </authorList>
    </citation>
    <scope>FUNCTION</scope>
    <scope>CATALYTIC ACTIVITY</scope>
    <scope>BIOPHYSICOCHEMICAL PROPERTIES</scope>
</reference>
<name>ATMA_SALTY</name>
<sequence>MLKIITRQLFARLNRHLPYRLVHRDPLPGAQTAVNATIPPSLSERCLKVAAMEQETLWRVFDTHPEGLNAAEVTRAREKHGENRLPAQKPSPWWVHLWVCYRNPFNILLTILGGISYATEDLFAAGVIALMVGISTLLNFVQEARSTKAADALKAMVSNTATVLRVINENGENAWLELPIDQLVPGDIIKLAAGDMIPADLRIIQARDLFVAQASLTGESLPVEKVAATREPRQNNPLECDTLCFMGTNVVSGTAQAVVMATGAGTWFGQLAGRVSEQDNEQNAFQKGISRVSMLLIRFMLVMAPVVLIINGYTKGDWWEAALFALSVAVGLTPEMLPMIVTSTLARGAVKLSKQKVIVKHLDAIQNFGAMDILCTDKTGTLTQDKIVLENHTDISGKPSEHVLHCAWLNSHYQTGLKNLLDTAVLEGVDETAARQLSGRWQKIDEIPFDFERRRMSVVVAEDSNVHQLVCKGALQEILNVCTQVRHNGDIVPLDDNMLRRVKRVTDTLNRQGLRVVAVATKYLPAREGDYQRIDESDLILEGYIAFLDPPKETTAPALKALKASGITVKILTGDSELVAAKVCHEVGLDAGDVIIGSDIEGLSDDALAALAARTTLFARLTPMHKERIVTLLKREGHVVGFMGDGINDAPALRAADIGISVDGAVDIAREAADIILLEKSLMVLEEGVIEGRRTFSNMLKYIKMTASSNFGNVFSVLVASAFLPFLPMLPLHLLIQNLLYDVSQVAIPFDNVDEEQIQKPQRWNPADLGRFMVFFGPISSIFDILTFCLMWWVFHANTPETQTLFQSGWFVVGLLSQTLIVHMIRTRRLPFIQSRAAWPLMAMTLLVMVVGVSLPFSPLASYLQLQALPLSYFPWLIAILVGYMTLTQLVKGFYSRRYGWQ</sequence>
<dbReference type="EC" id="7.2.2.14" evidence="5"/>
<dbReference type="EMBL" id="U07843">
    <property type="protein sequence ID" value="AAA68988.1"/>
    <property type="molecule type" value="Genomic_DNA"/>
</dbReference>
<dbReference type="EMBL" id="AE006468">
    <property type="protein sequence ID" value="AAL23275.1"/>
    <property type="molecule type" value="Genomic_DNA"/>
</dbReference>
<dbReference type="PIR" id="B57147">
    <property type="entry name" value="B57147"/>
</dbReference>
<dbReference type="RefSeq" id="NP_463316.1">
    <property type="nucleotide sequence ID" value="NC_003197.2"/>
</dbReference>
<dbReference type="RefSeq" id="WP_001738655.1">
    <property type="nucleotide sequence ID" value="NC_003197.2"/>
</dbReference>
<dbReference type="SMR" id="P36640"/>
<dbReference type="STRING" id="99287.STM4456"/>
<dbReference type="TCDB" id="3.A.3.4.1">
    <property type="family name" value="the p-type atpase (p-atpase) superfamily"/>
</dbReference>
<dbReference type="PaxDb" id="99287-STM4456"/>
<dbReference type="GeneID" id="1255982"/>
<dbReference type="KEGG" id="stm:STM4456"/>
<dbReference type="PATRIC" id="fig|99287.12.peg.4689"/>
<dbReference type="HOGENOM" id="CLU_002360_6_3_6"/>
<dbReference type="OMA" id="KMHACET"/>
<dbReference type="PhylomeDB" id="P36640"/>
<dbReference type="BioCyc" id="SENT99287:STM4456-MONOMER"/>
<dbReference type="Proteomes" id="UP000001014">
    <property type="component" value="Chromosome"/>
</dbReference>
<dbReference type="GO" id="GO:0043231">
    <property type="term" value="C:intracellular membrane-bounded organelle"/>
    <property type="evidence" value="ECO:0000318"/>
    <property type="project" value="GO_Central"/>
</dbReference>
<dbReference type="GO" id="GO:0005886">
    <property type="term" value="C:plasma membrane"/>
    <property type="evidence" value="ECO:0000318"/>
    <property type="project" value="GO_Central"/>
</dbReference>
<dbReference type="GO" id="GO:0005524">
    <property type="term" value="F:ATP binding"/>
    <property type="evidence" value="ECO:0007669"/>
    <property type="project" value="UniProtKB-KW"/>
</dbReference>
<dbReference type="GO" id="GO:0016887">
    <property type="term" value="F:ATP hydrolysis activity"/>
    <property type="evidence" value="ECO:0007669"/>
    <property type="project" value="InterPro"/>
</dbReference>
<dbReference type="GO" id="GO:0019829">
    <property type="term" value="F:ATPase-coupled monoatomic cation transmembrane transporter activity"/>
    <property type="evidence" value="ECO:0000318"/>
    <property type="project" value="GO_Central"/>
</dbReference>
<dbReference type="GO" id="GO:0046872">
    <property type="term" value="F:metal ion binding"/>
    <property type="evidence" value="ECO:0007669"/>
    <property type="project" value="UniProtKB-KW"/>
</dbReference>
<dbReference type="GO" id="GO:0015444">
    <property type="term" value="F:P-type magnesium transporter activity"/>
    <property type="evidence" value="ECO:0007669"/>
    <property type="project" value="UniProtKB-EC"/>
</dbReference>
<dbReference type="CDD" id="cd02077">
    <property type="entry name" value="P-type_ATPase_Mg"/>
    <property type="match status" value="1"/>
</dbReference>
<dbReference type="FunFam" id="2.70.150.10:FF:000045">
    <property type="entry name" value="Magnesium-translocating P-type ATPase"/>
    <property type="match status" value="1"/>
</dbReference>
<dbReference type="Gene3D" id="3.40.1110.10">
    <property type="entry name" value="Calcium-transporting ATPase, cytoplasmic domain N"/>
    <property type="match status" value="1"/>
</dbReference>
<dbReference type="Gene3D" id="2.70.150.10">
    <property type="entry name" value="Calcium-transporting ATPase, cytoplasmic transduction domain A"/>
    <property type="match status" value="1"/>
</dbReference>
<dbReference type="Gene3D" id="1.20.1110.10">
    <property type="entry name" value="Calcium-transporting ATPase, transmembrane domain"/>
    <property type="match status" value="1"/>
</dbReference>
<dbReference type="Gene3D" id="3.40.50.1000">
    <property type="entry name" value="HAD superfamily/HAD-like"/>
    <property type="match status" value="1"/>
</dbReference>
<dbReference type="InterPro" id="IPR006068">
    <property type="entry name" value="ATPase_P-typ_cation-transptr_C"/>
</dbReference>
<dbReference type="InterPro" id="IPR004014">
    <property type="entry name" value="ATPase_P-typ_cation-transptr_N"/>
</dbReference>
<dbReference type="InterPro" id="IPR023299">
    <property type="entry name" value="ATPase_P-typ_cyto_dom_N"/>
</dbReference>
<dbReference type="InterPro" id="IPR018303">
    <property type="entry name" value="ATPase_P-typ_P_site"/>
</dbReference>
<dbReference type="InterPro" id="IPR023298">
    <property type="entry name" value="ATPase_P-typ_TM_dom_sf"/>
</dbReference>
<dbReference type="InterPro" id="IPR008250">
    <property type="entry name" value="ATPase_P-typ_transduc_dom_A_sf"/>
</dbReference>
<dbReference type="InterPro" id="IPR036412">
    <property type="entry name" value="HAD-like_sf"/>
</dbReference>
<dbReference type="InterPro" id="IPR023214">
    <property type="entry name" value="HAD_sf"/>
</dbReference>
<dbReference type="InterPro" id="IPR006415">
    <property type="entry name" value="P-type_ATPase_IIIB"/>
</dbReference>
<dbReference type="InterPro" id="IPR001757">
    <property type="entry name" value="P_typ_ATPase"/>
</dbReference>
<dbReference type="InterPro" id="IPR044492">
    <property type="entry name" value="P_typ_ATPase_HD_dom"/>
</dbReference>
<dbReference type="NCBIfam" id="TIGR01524">
    <property type="entry name" value="ATPase-IIIB_Mg"/>
    <property type="match status" value="1"/>
</dbReference>
<dbReference type="NCBIfam" id="TIGR01494">
    <property type="entry name" value="ATPase_P-type"/>
    <property type="match status" value="2"/>
</dbReference>
<dbReference type="NCBIfam" id="NF011702">
    <property type="entry name" value="PRK15122.1"/>
    <property type="match status" value="1"/>
</dbReference>
<dbReference type="PANTHER" id="PTHR42861">
    <property type="entry name" value="CALCIUM-TRANSPORTING ATPASE"/>
    <property type="match status" value="1"/>
</dbReference>
<dbReference type="Pfam" id="PF00689">
    <property type="entry name" value="Cation_ATPase_C"/>
    <property type="match status" value="1"/>
</dbReference>
<dbReference type="Pfam" id="PF00690">
    <property type="entry name" value="Cation_ATPase_N"/>
    <property type="match status" value="1"/>
</dbReference>
<dbReference type="Pfam" id="PF00122">
    <property type="entry name" value="E1-E2_ATPase"/>
    <property type="match status" value="1"/>
</dbReference>
<dbReference type="Pfam" id="PF00702">
    <property type="entry name" value="Hydrolase"/>
    <property type="match status" value="1"/>
</dbReference>
<dbReference type="PRINTS" id="PR01836">
    <property type="entry name" value="MGATPASE"/>
</dbReference>
<dbReference type="SFLD" id="SFLDS00003">
    <property type="entry name" value="Haloacid_Dehalogenase"/>
    <property type="match status" value="1"/>
</dbReference>
<dbReference type="SFLD" id="SFLDF00027">
    <property type="entry name" value="p-type_atpase"/>
    <property type="match status" value="1"/>
</dbReference>
<dbReference type="SMART" id="SM00831">
    <property type="entry name" value="Cation_ATPase_N"/>
    <property type="match status" value="1"/>
</dbReference>
<dbReference type="SUPFAM" id="SSF81653">
    <property type="entry name" value="Calcium ATPase, transduction domain A"/>
    <property type="match status" value="1"/>
</dbReference>
<dbReference type="SUPFAM" id="SSF81665">
    <property type="entry name" value="Calcium ATPase, transmembrane domain M"/>
    <property type="match status" value="1"/>
</dbReference>
<dbReference type="SUPFAM" id="SSF56784">
    <property type="entry name" value="HAD-like"/>
    <property type="match status" value="1"/>
</dbReference>
<dbReference type="SUPFAM" id="SSF81660">
    <property type="entry name" value="Metal cation-transporting ATPase, ATP-binding domain N"/>
    <property type="match status" value="1"/>
</dbReference>
<dbReference type="PROSITE" id="PS00154">
    <property type="entry name" value="ATPASE_E1_E2"/>
    <property type="match status" value="1"/>
</dbReference>
<protein>
    <recommendedName>
        <fullName>Magnesium-transporting ATPase, P-type 1</fullName>
        <ecNumber evidence="5">7.2.2.14</ecNumber>
    </recommendedName>
    <alternativeName>
        <fullName>Mg(2+) transport ATPase, P-type 1</fullName>
    </alternativeName>
</protein>
<comment type="function">
    <text evidence="3 5">Mediates magnesium influx to the cytosol.</text>
</comment>
<comment type="catalytic activity">
    <reaction evidence="5">
        <text>Mg(2+)(out) + ATP + H2O = Mg(2+)(in) + ADP + phosphate + H(+)</text>
        <dbReference type="Rhea" id="RHEA:10260"/>
        <dbReference type="ChEBI" id="CHEBI:15377"/>
        <dbReference type="ChEBI" id="CHEBI:15378"/>
        <dbReference type="ChEBI" id="CHEBI:18420"/>
        <dbReference type="ChEBI" id="CHEBI:30616"/>
        <dbReference type="ChEBI" id="CHEBI:43474"/>
        <dbReference type="ChEBI" id="CHEBI:456216"/>
        <dbReference type="EC" id="7.2.2.14"/>
    </reaction>
</comment>
<comment type="biophysicochemical properties">
    <kinetics>
        <KM evidence="5">12 uM for magnesium ions (at 20 degrees Celsius)</KM>
        <KM evidence="5">29 uM for magnesium ions (at 37 degrees Celsius)</KM>
    </kinetics>
</comment>
<comment type="subcellular location">
    <subcellularLocation>
        <location evidence="4">Cell inner membrane</location>
        <topology evidence="2">Multi-pass membrane protein</topology>
    </subcellularLocation>
</comment>
<comment type="induction">
    <text evidence="6 7">Induced by low levels of proline and by osmotic shock. The leader of mgtA mRNA functions as a riboswitch, favoring transcription under low Mg(2+) conditions. Under limiting proline levels the MgtL peptide encoded within the mgtA leader cannot be translated, thereby favoring the transcription of the mgtA ORF. Induction by osmotic shock also depends on translational regulation by MgtL (Probable). Induced by low extracellular levels of Mg(2+).</text>
</comment>
<comment type="similarity">
    <text evidence="7">Belongs to the cation transport ATPase (P-type) (TC 3.A.3) family. Type IIIB subfamily.</text>
</comment>